<accession>P73341</accession>
<proteinExistence type="inferred from homology"/>
<keyword id="KW-1185">Reference proteome</keyword>
<name>Y1119_SYNY3</name>
<comment type="similarity">
    <text evidence="1">Belongs to the pseudomonas-type ThrB family.</text>
</comment>
<sequence>MPPLQLLRSLSALPDINPVVDFPAPNPAPKSTVAGDAFPSVYSTLAPHALTNLVFKHYDIEVPKGCRFWHRGLSDVYLVETLADDYILRISHQHWRTESEIQFELELLNFLADRDVPVAAPLRHRDGGYALEINAPEGKRYASLFPYAPGGVAIGDLSKTQGFLLGEMLAQLHQTAQRFKPSAHRPPLTLSYLLDDSLHTIAPFLHHRLEEWRCLIDISMAIKTQLTSIPTHTPYWTICWGDPHSGNVHFTAEDQMMLFDFDQCGMGWRAFDIAKFLQVSMQSGLGRNIRDAFLSGYNSIAPLTVLEENSLQALTQTAFIWSWAIHVQTLKLSDYSRLHGSYFKRRLENLQQLGSTDWQLF</sequence>
<evidence type="ECO:0000305" key="1"/>
<protein>
    <recommendedName>
        <fullName>Uncharacterized protein sll1119</fullName>
    </recommendedName>
</protein>
<dbReference type="EMBL" id="BA000022">
    <property type="protein sequence ID" value="BAA17372.1"/>
    <property type="molecule type" value="Genomic_DNA"/>
</dbReference>
<dbReference type="PIR" id="S77525">
    <property type="entry name" value="S77525"/>
</dbReference>
<dbReference type="SMR" id="P73341"/>
<dbReference type="IntAct" id="P73341">
    <property type="interactions" value="4"/>
</dbReference>
<dbReference type="STRING" id="1148.gene:10498235"/>
<dbReference type="PaxDb" id="1148-1652450"/>
<dbReference type="EnsemblBacteria" id="BAA17372">
    <property type="protein sequence ID" value="BAA17372"/>
    <property type="gene ID" value="BAA17372"/>
</dbReference>
<dbReference type="KEGG" id="syn:sll1119"/>
<dbReference type="eggNOG" id="COG2334">
    <property type="taxonomic scope" value="Bacteria"/>
</dbReference>
<dbReference type="InParanoid" id="P73341"/>
<dbReference type="PhylomeDB" id="P73341"/>
<dbReference type="Proteomes" id="UP000001425">
    <property type="component" value="Chromosome"/>
</dbReference>
<dbReference type="GO" id="GO:0004413">
    <property type="term" value="F:homoserine kinase activity"/>
    <property type="evidence" value="ECO:0000318"/>
    <property type="project" value="GO_Central"/>
</dbReference>
<dbReference type="GO" id="GO:0009088">
    <property type="term" value="P:threonine biosynthetic process"/>
    <property type="evidence" value="ECO:0000318"/>
    <property type="project" value="GO_Central"/>
</dbReference>
<dbReference type="Gene3D" id="3.90.1200.10">
    <property type="match status" value="1"/>
</dbReference>
<dbReference type="Gene3D" id="3.30.200.20">
    <property type="entry name" value="Phosphorylase Kinase, domain 1"/>
    <property type="match status" value="1"/>
</dbReference>
<dbReference type="InterPro" id="IPR002575">
    <property type="entry name" value="Aminoglycoside_PTrfase"/>
</dbReference>
<dbReference type="InterPro" id="IPR011009">
    <property type="entry name" value="Kinase-like_dom_sf"/>
</dbReference>
<dbReference type="InterPro" id="IPR050249">
    <property type="entry name" value="Pseudomonas-type_ThrB"/>
</dbReference>
<dbReference type="PANTHER" id="PTHR21064:SF6">
    <property type="entry name" value="AMINOGLYCOSIDE PHOSPHOTRANSFERASE DOMAIN-CONTAINING PROTEIN"/>
    <property type="match status" value="1"/>
</dbReference>
<dbReference type="PANTHER" id="PTHR21064">
    <property type="entry name" value="AMINOGLYCOSIDE PHOSPHOTRANSFERASE DOMAIN-CONTAINING PROTEIN-RELATED"/>
    <property type="match status" value="1"/>
</dbReference>
<dbReference type="Pfam" id="PF01636">
    <property type="entry name" value="APH"/>
    <property type="match status" value="1"/>
</dbReference>
<dbReference type="SUPFAM" id="SSF56112">
    <property type="entry name" value="Protein kinase-like (PK-like)"/>
    <property type="match status" value="1"/>
</dbReference>
<gene>
    <name type="ordered locus">sll1119</name>
</gene>
<reference key="1">
    <citation type="journal article" date="1996" name="DNA Res.">
        <title>Sequence analysis of the genome of the unicellular cyanobacterium Synechocystis sp. strain PCC6803. II. Sequence determination of the entire genome and assignment of potential protein-coding regions.</title>
        <authorList>
            <person name="Kaneko T."/>
            <person name="Sato S."/>
            <person name="Kotani H."/>
            <person name="Tanaka A."/>
            <person name="Asamizu E."/>
            <person name="Nakamura Y."/>
            <person name="Miyajima N."/>
            <person name="Hirosawa M."/>
            <person name="Sugiura M."/>
            <person name="Sasamoto S."/>
            <person name="Kimura T."/>
            <person name="Hosouchi T."/>
            <person name="Matsuno A."/>
            <person name="Muraki A."/>
            <person name="Nakazaki N."/>
            <person name="Naruo K."/>
            <person name="Okumura S."/>
            <person name="Shimpo S."/>
            <person name="Takeuchi C."/>
            <person name="Wada T."/>
            <person name="Watanabe A."/>
            <person name="Yamada M."/>
            <person name="Yasuda M."/>
            <person name="Tabata S."/>
        </authorList>
    </citation>
    <scope>NUCLEOTIDE SEQUENCE [LARGE SCALE GENOMIC DNA]</scope>
    <source>
        <strain>ATCC 27184 / PCC 6803 / Kazusa</strain>
    </source>
</reference>
<organism>
    <name type="scientific">Synechocystis sp. (strain ATCC 27184 / PCC 6803 / Kazusa)</name>
    <dbReference type="NCBI Taxonomy" id="1111708"/>
    <lineage>
        <taxon>Bacteria</taxon>
        <taxon>Bacillati</taxon>
        <taxon>Cyanobacteriota</taxon>
        <taxon>Cyanophyceae</taxon>
        <taxon>Synechococcales</taxon>
        <taxon>Merismopediaceae</taxon>
        <taxon>Synechocystis</taxon>
    </lineage>
</organism>
<feature type="chain" id="PRO_0000172203" description="Uncharacterized protein sll1119">
    <location>
        <begin position="1"/>
        <end position="361"/>
    </location>
</feature>